<accession>B0KC20</accession>
<organism>
    <name type="scientific">Thermoanaerobacter pseudethanolicus (strain ATCC 33223 / 39E)</name>
    <name type="common">Clostridium thermohydrosulfuricum</name>
    <dbReference type="NCBI Taxonomy" id="340099"/>
    <lineage>
        <taxon>Bacteria</taxon>
        <taxon>Bacillati</taxon>
        <taxon>Bacillota</taxon>
        <taxon>Clostridia</taxon>
        <taxon>Thermoanaerobacterales</taxon>
        <taxon>Thermoanaerobacteraceae</taxon>
        <taxon>Thermoanaerobacter</taxon>
    </lineage>
</organism>
<proteinExistence type="inferred from homology"/>
<comment type="function">
    <text evidence="1">Catalyzes the decarboxylative condensation of pimeloyl-[acyl-carrier protein] and L-alanine to produce 8-amino-7-oxononanoate (AON), [acyl-carrier protein], and carbon dioxide.</text>
</comment>
<comment type="catalytic activity">
    <reaction>
        <text>6-carboxyhexanoyl-[ACP] + L-alanine + H(+) = (8S)-8-amino-7-oxononanoate + holo-[ACP] + CO2</text>
        <dbReference type="Rhea" id="RHEA:42288"/>
        <dbReference type="Rhea" id="RHEA-COMP:9685"/>
        <dbReference type="Rhea" id="RHEA-COMP:9955"/>
        <dbReference type="ChEBI" id="CHEBI:15378"/>
        <dbReference type="ChEBI" id="CHEBI:16526"/>
        <dbReference type="ChEBI" id="CHEBI:57972"/>
        <dbReference type="ChEBI" id="CHEBI:64479"/>
        <dbReference type="ChEBI" id="CHEBI:78846"/>
        <dbReference type="ChEBI" id="CHEBI:149468"/>
        <dbReference type="EC" id="2.3.1.47"/>
    </reaction>
</comment>
<comment type="cofactor">
    <cofactor evidence="1">
        <name>pyridoxal 5'-phosphate</name>
        <dbReference type="ChEBI" id="CHEBI:597326"/>
    </cofactor>
</comment>
<comment type="pathway">
    <text>Cofactor biosynthesis; biotin biosynthesis.</text>
</comment>
<comment type="subunit">
    <text evidence="1">Homodimer.</text>
</comment>
<comment type="similarity">
    <text evidence="2">Belongs to the class-II pyridoxal-phosphate-dependent aminotransferase family. BioF subfamily.</text>
</comment>
<protein>
    <recommendedName>
        <fullName>8-amino-7-oxononanoate synthase</fullName>
        <shortName>AONS</shortName>
        <ecNumber>2.3.1.47</ecNumber>
    </recommendedName>
    <alternativeName>
        <fullName>7-keto-8-amino-pelargonic acid synthase</fullName>
        <shortName>7-KAP synthase</shortName>
        <shortName>KAPA synthase</shortName>
    </alternativeName>
    <alternativeName>
        <fullName>8-amino-7-ketopelargonate synthase</fullName>
    </alternativeName>
    <alternativeName>
        <fullName>Alpha-oxoamine synthase</fullName>
    </alternativeName>
</protein>
<keyword id="KW-0012">Acyltransferase</keyword>
<keyword id="KW-0093">Biotin biosynthesis</keyword>
<keyword id="KW-0663">Pyridoxal phosphate</keyword>
<keyword id="KW-1185">Reference proteome</keyword>
<keyword id="KW-0808">Transferase</keyword>
<gene>
    <name type="ordered locus">Teth39_0287</name>
</gene>
<feature type="chain" id="PRO_0000381123" description="8-amino-7-oxononanoate synthase">
    <location>
        <begin position="1"/>
        <end position="395"/>
    </location>
</feature>
<feature type="binding site" evidence="1">
    <location>
        <position position="24"/>
    </location>
    <ligand>
        <name>substrate</name>
    </ligand>
</feature>
<feature type="binding site" evidence="1">
    <location>
        <begin position="111"/>
        <end position="112"/>
    </location>
    <ligand>
        <name>pyridoxal 5'-phosphate</name>
        <dbReference type="ChEBI" id="CHEBI:597326"/>
    </ligand>
</feature>
<feature type="binding site" evidence="1">
    <location>
        <position position="136"/>
    </location>
    <ligand>
        <name>substrate</name>
    </ligand>
</feature>
<feature type="binding site" evidence="1">
    <location>
        <position position="184"/>
    </location>
    <ligand>
        <name>pyridoxal 5'-phosphate</name>
        <dbReference type="ChEBI" id="CHEBI:597326"/>
    </ligand>
</feature>
<feature type="binding site" evidence="1">
    <location>
        <begin position="209"/>
        <end position="212"/>
    </location>
    <ligand>
        <name>pyridoxal 5'-phosphate</name>
        <dbReference type="ChEBI" id="CHEBI:597326"/>
    </ligand>
</feature>
<feature type="binding site" evidence="1">
    <location>
        <begin position="240"/>
        <end position="243"/>
    </location>
    <ligand>
        <name>pyridoxal 5'-phosphate</name>
        <dbReference type="ChEBI" id="CHEBI:597326"/>
    </ligand>
</feature>
<feature type="binding site" evidence="1">
    <location>
        <position position="357"/>
    </location>
    <ligand>
        <name>substrate</name>
    </ligand>
</feature>
<feature type="modified residue" description="N6-(pyridoxal phosphate)lysine" evidence="1">
    <location>
        <position position="243"/>
    </location>
</feature>
<name>BIOF_THEP3</name>
<dbReference type="EC" id="2.3.1.47"/>
<dbReference type="EMBL" id="CP000924">
    <property type="protein sequence ID" value="ABY93956.1"/>
    <property type="molecule type" value="Genomic_DNA"/>
</dbReference>
<dbReference type="RefSeq" id="WP_003867784.1">
    <property type="nucleotide sequence ID" value="NC_010321.1"/>
</dbReference>
<dbReference type="SMR" id="B0KC20"/>
<dbReference type="STRING" id="340099.Teth39_0287"/>
<dbReference type="KEGG" id="tpd:Teth39_0287"/>
<dbReference type="eggNOG" id="COG0156">
    <property type="taxonomic scope" value="Bacteria"/>
</dbReference>
<dbReference type="HOGENOM" id="CLU_015846_11_0_9"/>
<dbReference type="UniPathway" id="UPA00078"/>
<dbReference type="Proteomes" id="UP000002156">
    <property type="component" value="Chromosome"/>
</dbReference>
<dbReference type="GO" id="GO:0008710">
    <property type="term" value="F:8-amino-7-oxononanoate synthase activity"/>
    <property type="evidence" value="ECO:0000250"/>
    <property type="project" value="UniProtKB"/>
</dbReference>
<dbReference type="GO" id="GO:0008890">
    <property type="term" value="F:glycine C-acetyltransferase activity"/>
    <property type="evidence" value="ECO:0000250"/>
    <property type="project" value="UniProtKB"/>
</dbReference>
<dbReference type="GO" id="GO:0030170">
    <property type="term" value="F:pyridoxal phosphate binding"/>
    <property type="evidence" value="ECO:0000250"/>
    <property type="project" value="UniProtKB"/>
</dbReference>
<dbReference type="GO" id="GO:0009102">
    <property type="term" value="P:biotin biosynthetic process"/>
    <property type="evidence" value="ECO:0000250"/>
    <property type="project" value="UniProtKB"/>
</dbReference>
<dbReference type="CDD" id="cd06454">
    <property type="entry name" value="KBL_like"/>
    <property type="match status" value="1"/>
</dbReference>
<dbReference type="FunFam" id="3.90.1150.10:FF:000004">
    <property type="entry name" value="2-amino-3-ketobutyrate coenzyme A ligase"/>
    <property type="match status" value="1"/>
</dbReference>
<dbReference type="FunFam" id="3.40.640.10:FF:000006">
    <property type="entry name" value="5-aminolevulinate synthase, mitochondrial"/>
    <property type="match status" value="1"/>
</dbReference>
<dbReference type="Gene3D" id="3.90.1150.10">
    <property type="entry name" value="Aspartate Aminotransferase, domain 1"/>
    <property type="match status" value="1"/>
</dbReference>
<dbReference type="Gene3D" id="3.40.640.10">
    <property type="entry name" value="Type I PLP-dependent aspartate aminotransferase-like (Major domain)"/>
    <property type="match status" value="1"/>
</dbReference>
<dbReference type="InterPro" id="IPR001917">
    <property type="entry name" value="Aminotrans_II_pyridoxalP_BS"/>
</dbReference>
<dbReference type="InterPro" id="IPR004839">
    <property type="entry name" value="Aminotransferase_I/II_large"/>
</dbReference>
<dbReference type="InterPro" id="IPR050087">
    <property type="entry name" value="AON_synthase_class-II"/>
</dbReference>
<dbReference type="InterPro" id="IPR010962">
    <property type="entry name" value="AONS_Archaea/Firmicutes"/>
</dbReference>
<dbReference type="InterPro" id="IPR004723">
    <property type="entry name" value="AONS_Archaea/Proteobacteria"/>
</dbReference>
<dbReference type="InterPro" id="IPR015424">
    <property type="entry name" value="PyrdxlP-dep_Trfase"/>
</dbReference>
<dbReference type="InterPro" id="IPR015421">
    <property type="entry name" value="PyrdxlP-dep_Trfase_major"/>
</dbReference>
<dbReference type="InterPro" id="IPR015422">
    <property type="entry name" value="PyrdxlP-dep_Trfase_small"/>
</dbReference>
<dbReference type="NCBIfam" id="TIGR00858">
    <property type="entry name" value="bioF"/>
    <property type="match status" value="1"/>
</dbReference>
<dbReference type="NCBIfam" id="TIGR01825">
    <property type="entry name" value="gly_Cac_T_rel"/>
    <property type="match status" value="1"/>
</dbReference>
<dbReference type="NCBIfam" id="NF005394">
    <property type="entry name" value="PRK06939.1"/>
    <property type="match status" value="1"/>
</dbReference>
<dbReference type="PANTHER" id="PTHR13693">
    <property type="entry name" value="CLASS II AMINOTRANSFERASE/8-AMINO-7-OXONONANOATE SYNTHASE"/>
    <property type="match status" value="1"/>
</dbReference>
<dbReference type="PANTHER" id="PTHR13693:SF3">
    <property type="entry name" value="LD36009P"/>
    <property type="match status" value="1"/>
</dbReference>
<dbReference type="Pfam" id="PF00155">
    <property type="entry name" value="Aminotran_1_2"/>
    <property type="match status" value="1"/>
</dbReference>
<dbReference type="SUPFAM" id="SSF53383">
    <property type="entry name" value="PLP-dependent transferases"/>
    <property type="match status" value="1"/>
</dbReference>
<dbReference type="PROSITE" id="PS00599">
    <property type="entry name" value="AA_TRANSFER_CLASS_2"/>
    <property type="match status" value="1"/>
</dbReference>
<reference key="1">
    <citation type="submission" date="2008-01" db="EMBL/GenBank/DDBJ databases">
        <title>Complete sequence of Thermoanaerobacter pseudethanolicus 39E.</title>
        <authorList>
            <person name="Copeland A."/>
            <person name="Lucas S."/>
            <person name="Lapidus A."/>
            <person name="Barry K."/>
            <person name="Glavina del Rio T."/>
            <person name="Dalin E."/>
            <person name="Tice H."/>
            <person name="Pitluck S."/>
            <person name="Bruce D."/>
            <person name="Goodwin L."/>
            <person name="Saunders E."/>
            <person name="Brettin T."/>
            <person name="Detter J.C."/>
            <person name="Han C."/>
            <person name="Schmutz J."/>
            <person name="Larimer F."/>
            <person name="Land M."/>
            <person name="Hauser L."/>
            <person name="Kyrpides N."/>
            <person name="Lykidis A."/>
            <person name="Hemme C."/>
            <person name="Fields M.W."/>
            <person name="He Z."/>
            <person name="Zhou J."/>
            <person name="Richardson P."/>
        </authorList>
    </citation>
    <scope>NUCLEOTIDE SEQUENCE [LARGE SCALE GENOMIC DNA]</scope>
    <source>
        <strain>ATCC 33223 / DSM 2355 / 39E</strain>
    </source>
</reference>
<evidence type="ECO:0000250" key="1"/>
<evidence type="ECO:0000305" key="2"/>
<sequence length="395" mass="43453">MSSIHDLDFIKEKLEELKKAGVYRKLTVLESPSGPRSIIDGKEVINLSSNNYLGLANHPRLKKAAIEAIEKWGVGAGAVRTIIGNMTIHEELERKLAEFKREEAVLTFQSGFTANMGVIQAVVDKGDVIISDELNHASIIDGCRLSRADVVIYKHSDMEDLERVLKEVKDKYRVKMIITDGVFSMDGDIAKLPEIVKLAEKYSAITYVDDAHASGVLGESGRGSADHFNLHGRIDIQIGTLSKAIGVVGGYVAGKRELIEWLNHRGRPFLFSTALPPAAVAASIEAINILSESDALTRKLWDNAKYFKEKLKSLGFDTGKSETPITPVIIGEETKALEFSRKLFEEGVFAQGIVYPTVPKNKARVRTIVTAAHTKEDLDAALKAFEKVGKQLNII</sequence>